<accession>B4U762</accession>
<reference key="1">
    <citation type="journal article" date="2009" name="J. Bacteriol.">
        <title>Complete and draft genome sequences of six members of the Aquificales.</title>
        <authorList>
            <person name="Reysenbach A.-L."/>
            <person name="Hamamura N."/>
            <person name="Podar M."/>
            <person name="Griffiths E."/>
            <person name="Ferreira S."/>
            <person name="Hochstein R."/>
            <person name="Heidelberg J."/>
            <person name="Johnson J."/>
            <person name="Mead D."/>
            <person name="Pohorille A."/>
            <person name="Sarmiento M."/>
            <person name="Schweighofer K."/>
            <person name="Seshadri R."/>
            <person name="Voytek M.A."/>
        </authorList>
    </citation>
    <scope>NUCLEOTIDE SEQUENCE [LARGE SCALE GENOMIC DNA]</scope>
    <source>
        <strain>Y04AAS1</strain>
    </source>
</reference>
<comment type="subunit">
    <text evidence="1">Part of the 50S ribosomal subunit.</text>
</comment>
<comment type="similarity">
    <text evidence="1">Belongs to the universal ribosomal protein uL30 family.</text>
</comment>
<organism>
    <name type="scientific">Hydrogenobaculum sp. (strain Y04AAS1)</name>
    <dbReference type="NCBI Taxonomy" id="380749"/>
    <lineage>
        <taxon>Bacteria</taxon>
        <taxon>Pseudomonadati</taxon>
        <taxon>Aquificota</taxon>
        <taxon>Aquificia</taxon>
        <taxon>Aquificales</taxon>
        <taxon>Aquificaceae</taxon>
        <taxon>Hydrogenobaculum</taxon>
    </lineage>
</organism>
<proteinExistence type="inferred from homology"/>
<sequence length="59" mass="6529">MKLKIVLRRGLAGKDKAKKEAVRSLGLKKVGETVILEKNPMVCGNLEKVKHLVCVEELS</sequence>
<gene>
    <name evidence="1" type="primary">rpmD</name>
    <name type="ordered locus">HY04AAS1_0283</name>
</gene>
<feature type="chain" id="PRO_1000144690" description="Large ribosomal subunit protein uL30">
    <location>
        <begin position="1"/>
        <end position="59"/>
    </location>
</feature>
<dbReference type="EMBL" id="CP001130">
    <property type="protein sequence ID" value="ACG56973.1"/>
    <property type="molecule type" value="Genomic_DNA"/>
</dbReference>
<dbReference type="RefSeq" id="WP_012513329.1">
    <property type="nucleotide sequence ID" value="NC_011126.1"/>
</dbReference>
<dbReference type="SMR" id="B4U762"/>
<dbReference type="STRING" id="380749.HY04AAS1_0283"/>
<dbReference type="KEGG" id="hya:HY04AAS1_0283"/>
<dbReference type="eggNOG" id="COG1841">
    <property type="taxonomic scope" value="Bacteria"/>
</dbReference>
<dbReference type="HOGENOM" id="CLU_131047_2_1_0"/>
<dbReference type="OrthoDB" id="9812790at2"/>
<dbReference type="GO" id="GO:0022625">
    <property type="term" value="C:cytosolic large ribosomal subunit"/>
    <property type="evidence" value="ECO:0007669"/>
    <property type="project" value="TreeGrafter"/>
</dbReference>
<dbReference type="GO" id="GO:0003735">
    <property type="term" value="F:structural constituent of ribosome"/>
    <property type="evidence" value="ECO:0007669"/>
    <property type="project" value="InterPro"/>
</dbReference>
<dbReference type="GO" id="GO:0006412">
    <property type="term" value="P:translation"/>
    <property type="evidence" value="ECO:0007669"/>
    <property type="project" value="UniProtKB-UniRule"/>
</dbReference>
<dbReference type="CDD" id="cd01658">
    <property type="entry name" value="Ribosomal_L30"/>
    <property type="match status" value="1"/>
</dbReference>
<dbReference type="Gene3D" id="3.30.1390.20">
    <property type="entry name" value="Ribosomal protein L30, ferredoxin-like fold domain"/>
    <property type="match status" value="1"/>
</dbReference>
<dbReference type="HAMAP" id="MF_01371_B">
    <property type="entry name" value="Ribosomal_uL30_B"/>
    <property type="match status" value="1"/>
</dbReference>
<dbReference type="InterPro" id="IPR036919">
    <property type="entry name" value="Ribo_uL30_ferredoxin-like_sf"/>
</dbReference>
<dbReference type="InterPro" id="IPR005996">
    <property type="entry name" value="Ribosomal_uL30_bac-type"/>
</dbReference>
<dbReference type="InterPro" id="IPR016082">
    <property type="entry name" value="Ribosomal_uL30_ferredoxin-like"/>
</dbReference>
<dbReference type="NCBIfam" id="TIGR01308">
    <property type="entry name" value="rpmD_bact"/>
    <property type="match status" value="1"/>
</dbReference>
<dbReference type="PANTHER" id="PTHR15892:SF2">
    <property type="entry name" value="LARGE RIBOSOMAL SUBUNIT PROTEIN UL30M"/>
    <property type="match status" value="1"/>
</dbReference>
<dbReference type="PANTHER" id="PTHR15892">
    <property type="entry name" value="MITOCHONDRIAL RIBOSOMAL PROTEIN L30"/>
    <property type="match status" value="1"/>
</dbReference>
<dbReference type="Pfam" id="PF00327">
    <property type="entry name" value="Ribosomal_L30"/>
    <property type="match status" value="1"/>
</dbReference>
<dbReference type="PIRSF" id="PIRSF002211">
    <property type="entry name" value="Ribosomal_L30_bac-type"/>
    <property type="match status" value="1"/>
</dbReference>
<dbReference type="SUPFAM" id="SSF55129">
    <property type="entry name" value="Ribosomal protein L30p/L7e"/>
    <property type="match status" value="1"/>
</dbReference>
<keyword id="KW-0687">Ribonucleoprotein</keyword>
<keyword id="KW-0689">Ribosomal protein</keyword>
<name>RL30_HYDS0</name>
<protein>
    <recommendedName>
        <fullName evidence="1">Large ribosomal subunit protein uL30</fullName>
    </recommendedName>
    <alternativeName>
        <fullName evidence="2">50S ribosomal protein L30</fullName>
    </alternativeName>
</protein>
<evidence type="ECO:0000255" key="1">
    <source>
        <dbReference type="HAMAP-Rule" id="MF_01371"/>
    </source>
</evidence>
<evidence type="ECO:0000305" key="2"/>